<dbReference type="EMBL" id="AE017354">
    <property type="protein sequence ID" value="AAU26179.1"/>
    <property type="molecule type" value="Genomic_DNA"/>
</dbReference>
<dbReference type="RefSeq" id="WP_010945833.1">
    <property type="nucleotide sequence ID" value="NC_002942.5"/>
</dbReference>
<dbReference type="RefSeq" id="YP_094126.1">
    <property type="nucleotide sequence ID" value="NC_002942.5"/>
</dbReference>
<dbReference type="SMR" id="Q5ZZD9"/>
<dbReference type="STRING" id="272624.lpg0072"/>
<dbReference type="PaxDb" id="272624-lpg0072"/>
<dbReference type="GeneID" id="57034079"/>
<dbReference type="KEGG" id="lpn:lpg0072"/>
<dbReference type="PATRIC" id="fig|272624.6.peg.77"/>
<dbReference type="eggNOG" id="COG0556">
    <property type="taxonomic scope" value="Bacteria"/>
</dbReference>
<dbReference type="HOGENOM" id="CLU_009621_2_1_6"/>
<dbReference type="OrthoDB" id="9806651at2"/>
<dbReference type="Proteomes" id="UP000000609">
    <property type="component" value="Chromosome"/>
</dbReference>
<dbReference type="GO" id="GO:0005737">
    <property type="term" value="C:cytoplasm"/>
    <property type="evidence" value="ECO:0007669"/>
    <property type="project" value="UniProtKB-SubCell"/>
</dbReference>
<dbReference type="GO" id="GO:0009380">
    <property type="term" value="C:excinuclease repair complex"/>
    <property type="evidence" value="ECO:0007669"/>
    <property type="project" value="InterPro"/>
</dbReference>
<dbReference type="GO" id="GO:0005524">
    <property type="term" value="F:ATP binding"/>
    <property type="evidence" value="ECO:0007669"/>
    <property type="project" value="UniProtKB-UniRule"/>
</dbReference>
<dbReference type="GO" id="GO:0016887">
    <property type="term" value="F:ATP hydrolysis activity"/>
    <property type="evidence" value="ECO:0007669"/>
    <property type="project" value="InterPro"/>
</dbReference>
<dbReference type="GO" id="GO:0003677">
    <property type="term" value="F:DNA binding"/>
    <property type="evidence" value="ECO:0007669"/>
    <property type="project" value="UniProtKB-UniRule"/>
</dbReference>
<dbReference type="GO" id="GO:0009381">
    <property type="term" value="F:excinuclease ABC activity"/>
    <property type="evidence" value="ECO:0007669"/>
    <property type="project" value="UniProtKB-UniRule"/>
</dbReference>
<dbReference type="GO" id="GO:0006289">
    <property type="term" value="P:nucleotide-excision repair"/>
    <property type="evidence" value="ECO:0007669"/>
    <property type="project" value="UniProtKB-UniRule"/>
</dbReference>
<dbReference type="GO" id="GO:0009432">
    <property type="term" value="P:SOS response"/>
    <property type="evidence" value="ECO:0007669"/>
    <property type="project" value="UniProtKB-UniRule"/>
</dbReference>
<dbReference type="CDD" id="cd17916">
    <property type="entry name" value="DEXHc_UvrB"/>
    <property type="match status" value="1"/>
</dbReference>
<dbReference type="CDD" id="cd18790">
    <property type="entry name" value="SF2_C_UvrB"/>
    <property type="match status" value="1"/>
</dbReference>
<dbReference type="FunFam" id="3.40.50.300:FF:000477">
    <property type="entry name" value="UvrABC system protein B"/>
    <property type="match status" value="1"/>
</dbReference>
<dbReference type="Gene3D" id="6.10.140.240">
    <property type="match status" value="1"/>
</dbReference>
<dbReference type="Gene3D" id="3.40.50.300">
    <property type="entry name" value="P-loop containing nucleotide triphosphate hydrolases"/>
    <property type="match status" value="3"/>
</dbReference>
<dbReference type="Gene3D" id="4.10.860.10">
    <property type="entry name" value="UVR domain"/>
    <property type="match status" value="1"/>
</dbReference>
<dbReference type="HAMAP" id="MF_00204">
    <property type="entry name" value="UvrB"/>
    <property type="match status" value="1"/>
</dbReference>
<dbReference type="InterPro" id="IPR006935">
    <property type="entry name" value="Helicase/UvrB_N"/>
</dbReference>
<dbReference type="InterPro" id="IPR014001">
    <property type="entry name" value="Helicase_ATP-bd"/>
</dbReference>
<dbReference type="InterPro" id="IPR001650">
    <property type="entry name" value="Helicase_C-like"/>
</dbReference>
<dbReference type="InterPro" id="IPR027417">
    <property type="entry name" value="P-loop_NTPase"/>
</dbReference>
<dbReference type="InterPro" id="IPR001943">
    <property type="entry name" value="UVR_dom"/>
</dbReference>
<dbReference type="InterPro" id="IPR036876">
    <property type="entry name" value="UVR_dom_sf"/>
</dbReference>
<dbReference type="InterPro" id="IPR004807">
    <property type="entry name" value="UvrB"/>
</dbReference>
<dbReference type="InterPro" id="IPR041471">
    <property type="entry name" value="UvrB_inter"/>
</dbReference>
<dbReference type="InterPro" id="IPR024759">
    <property type="entry name" value="UvrB_YAD/RRR_dom"/>
</dbReference>
<dbReference type="NCBIfam" id="NF003673">
    <property type="entry name" value="PRK05298.1"/>
    <property type="match status" value="1"/>
</dbReference>
<dbReference type="NCBIfam" id="TIGR00631">
    <property type="entry name" value="uvrb"/>
    <property type="match status" value="1"/>
</dbReference>
<dbReference type="PANTHER" id="PTHR24029">
    <property type="entry name" value="UVRABC SYSTEM PROTEIN B"/>
    <property type="match status" value="1"/>
</dbReference>
<dbReference type="PANTHER" id="PTHR24029:SF0">
    <property type="entry name" value="UVRABC SYSTEM PROTEIN B"/>
    <property type="match status" value="1"/>
</dbReference>
<dbReference type="Pfam" id="PF00271">
    <property type="entry name" value="Helicase_C"/>
    <property type="match status" value="1"/>
</dbReference>
<dbReference type="Pfam" id="PF04851">
    <property type="entry name" value="ResIII"/>
    <property type="match status" value="1"/>
</dbReference>
<dbReference type="Pfam" id="PF02151">
    <property type="entry name" value="UVR"/>
    <property type="match status" value="1"/>
</dbReference>
<dbReference type="Pfam" id="PF12344">
    <property type="entry name" value="UvrB"/>
    <property type="match status" value="1"/>
</dbReference>
<dbReference type="Pfam" id="PF17757">
    <property type="entry name" value="UvrB_inter"/>
    <property type="match status" value="1"/>
</dbReference>
<dbReference type="SMART" id="SM00487">
    <property type="entry name" value="DEXDc"/>
    <property type="match status" value="1"/>
</dbReference>
<dbReference type="SMART" id="SM00490">
    <property type="entry name" value="HELICc"/>
    <property type="match status" value="1"/>
</dbReference>
<dbReference type="SUPFAM" id="SSF46600">
    <property type="entry name" value="C-terminal UvrC-binding domain of UvrB"/>
    <property type="match status" value="1"/>
</dbReference>
<dbReference type="SUPFAM" id="SSF52540">
    <property type="entry name" value="P-loop containing nucleoside triphosphate hydrolases"/>
    <property type="match status" value="2"/>
</dbReference>
<dbReference type="PROSITE" id="PS51192">
    <property type="entry name" value="HELICASE_ATP_BIND_1"/>
    <property type="match status" value="1"/>
</dbReference>
<dbReference type="PROSITE" id="PS51194">
    <property type="entry name" value="HELICASE_CTER"/>
    <property type="match status" value="1"/>
</dbReference>
<dbReference type="PROSITE" id="PS50151">
    <property type="entry name" value="UVR"/>
    <property type="match status" value="1"/>
</dbReference>
<name>UVRB_LEGPH</name>
<gene>
    <name evidence="1" type="primary">uvrB</name>
    <name type="ordered locus">lpg0072</name>
</gene>
<comment type="function">
    <text evidence="1">The UvrABC repair system catalyzes the recognition and processing of DNA lesions. A damage recognition complex composed of 2 UvrA and 2 UvrB subunits scans DNA for abnormalities. Upon binding of the UvrA(2)B(2) complex to a putative damaged site, the DNA wraps around one UvrB monomer. DNA wrap is dependent on ATP binding by UvrB and probably causes local melting of the DNA helix, facilitating insertion of UvrB beta-hairpin between the DNA strands. Then UvrB probes one DNA strand for the presence of a lesion. If a lesion is found the UvrA subunits dissociate and the UvrB-DNA preincision complex is formed. This complex is subsequently bound by UvrC and the second UvrB is released. If no lesion is found, the DNA wraps around the other UvrB subunit that will check the other stand for damage.</text>
</comment>
<comment type="subunit">
    <text evidence="1">Forms a heterotetramer with UvrA during the search for lesions. Interacts with UvrC in an incision complex.</text>
</comment>
<comment type="subcellular location">
    <subcellularLocation>
        <location evidence="1">Cytoplasm</location>
    </subcellularLocation>
</comment>
<comment type="domain">
    <text evidence="1">The beta-hairpin motif is involved in DNA binding.</text>
</comment>
<comment type="similarity">
    <text evidence="1">Belongs to the UvrB family.</text>
</comment>
<sequence length="663" mass="75631">MKDLFKIYSNYQPAGDQPTAIASLIDGLESGLAKQTLLGVTGSGKTFTIAHVIQAMKRPTLIMAPNKTLAAQLYGEFKAFFPDNAVEYFVSYYDYYQPEAYVPASDTFIEKDASINEHIEQMRLSATKALIERKDAIIVATVSAIYGLGDPDSYLRMLLHLSRGEQSDQRKILKRLAEMQYTRTNLSLERGQFRVHGDVIDIFPADSEKEAIRIELFDDEVDNIARFDPLTGEILQRLPRVTIFPKTHYVTPRERILETVEKVKVELQERLAELNAQNKLVEAQRLEQRTCFDIEMMLELGYCSGIENYSRYLSNREAGEAPPTLFDYLPPEALLIIDESHVTVPQIGGMYRGDRARKETLVNYGFRLPSALDNRPLRFEEFEERSPQTIYISATPGPYEQEHSDNVAEQVVRPTGLIDPEVEIRPVKTQVDDLMSEIRQVIAQGSRILVTTLTKRMAEDLTEYLSEHGIKVRYLHSDVDTVERMEIIRDLRLGEFDVLVGINLLREGLDMPEVALVAILDADKEGFLRSERSLIQTIGRAARNVKGRAILYADTITGSMQRALTETERRREKQKAFNLEHGITPKGINKSVEDILEGAYIGKRKTVVAEKSPQYTHWSPQELVKQINALEKQMYSHAQNMEFELAAKIRDEYLLLKEQLMKI</sequence>
<accession>Q5ZZD9</accession>
<evidence type="ECO:0000255" key="1">
    <source>
        <dbReference type="HAMAP-Rule" id="MF_00204"/>
    </source>
</evidence>
<feature type="chain" id="PRO_0000227326" description="UvrABC system protein B">
    <location>
        <begin position="1"/>
        <end position="663"/>
    </location>
</feature>
<feature type="domain" description="Helicase ATP-binding" evidence="1">
    <location>
        <begin position="26"/>
        <end position="414"/>
    </location>
</feature>
<feature type="domain" description="Helicase C-terminal" evidence="1">
    <location>
        <begin position="430"/>
        <end position="596"/>
    </location>
</feature>
<feature type="domain" description="UVR" evidence="1">
    <location>
        <begin position="624"/>
        <end position="659"/>
    </location>
</feature>
<feature type="short sequence motif" description="Beta-hairpin">
    <location>
        <begin position="92"/>
        <end position="115"/>
    </location>
</feature>
<feature type="binding site" evidence="1">
    <location>
        <begin position="39"/>
        <end position="46"/>
    </location>
    <ligand>
        <name>ATP</name>
        <dbReference type="ChEBI" id="CHEBI:30616"/>
    </ligand>
</feature>
<keyword id="KW-0067">ATP-binding</keyword>
<keyword id="KW-0963">Cytoplasm</keyword>
<keyword id="KW-0227">DNA damage</keyword>
<keyword id="KW-0228">DNA excision</keyword>
<keyword id="KW-0234">DNA repair</keyword>
<keyword id="KW-0267">Excision nuclease</keyword>
<keyword id="KW-0547">Nucleotide-binding</keyword>
<keyword id="KW-1185">Reference proteome</keyword>
<keyword id="KW-0742">SOS response</keyword>
<reference key="1">
    <citation type="journal article" date="2004" name="Science">
        <title>The genomic sequence of the accidental pathogen Legionella pneumophila.</title>
        <authorList>
            <person name="Chien M."/>
            <person name="Morozova I."/>
            <person name="Shi S."/>
            <person name="Sheng H."/>
            <person name="Chen J."/>
            <person name="Gomez S.M."/>
            <person name="Asamani G."/>
            <person name="Hill K."/>
            <person name="Nuara J."/>
            <person name="Feder M."/>
            <person name="Rineer J."/>
            <person name="Greenberg J.J."/>
            <person name="Steshenko V."/>
            <person name="Park S.H."/>
            <person name="Zhao B."/>
            <person name="Teplitskaya E."/>
            <person name="Edwards J.R."/>
            <person name="Pampou S."/>
            <person name="Georghiou A."/>
            <person name="Chou I.-C."/>
            <person name="Iannuccilli W."/>
            <person name="Ulz M.E."/>
            <person name="Kim D.H."/>
            <person name="Geringer-Sameth A."/>
            <person name="Goldsberry C."/>
            <person name="Morozov P."/>
            <person name="Fischer S.G."/>
            <person name="Segal G."/>
            <person name="Qu X."/>
            <person name="Rzhetsky A."/>
            <person name="Zhang P."/>
            <person name="Cayanis E."/>
            <person name="De Jong P.J."/>
            <person name="Ju J."/>
            <person name="Kalachikov S."/>
            <person name="Shuman H.A."/>
            <person name="Russo J.J."/>
        </authorList>
    </citation>
    <scope>NUCLEOTIDE SEQUENCE [LARGE SCALE GENOMIC DNA]</scope>
    <source>
        <strain>Philadelphia 1 / ATCC 33152 / DSM 7513</strain>
    </source>
</reference>
<organism>
    <name type="scientific">Legionella pneumophila subsp. pneumophila (strain Philadelphia 1 / ATCC 33152 / DSM 7513)</name>
    <dbReference type="NCBI Taxonomy" id="272624"/>
    <lineage>
        <taxon>Bacteria</taxon>
        <taxon>Pseudomonadati</taxon>
        <taxon>Pseudomonadota</taxon>
        <taxon>Gammaproteobacteria</taxon>
        <taxon>Legionellales</taxon>
        <taxon>Legionellaceae</taxon>
        <taxon>Legionella</taxon>
    </lineage>
</organism>
<protein>
    <recommendedName>
        <fullName evidence="1">UvrABC system protein B</fullName>
        <shortName evidence="1">Protein UvrB</shortName>
    </recommendedName>
    <alternativeName>
        <fullName evidence="1">Excinuclease ABC subunit B</fullName>
    </alternativeName>
</protein>
<proteinExistence type="inferred from homology"/>